<proteinExistence type="predicted"/>
<protein>
    <recommendedName>
        <fullName>Uncharacterized protein ORF61</fullName>
    </recommendedName>
</protein>
<feature type="chain" id="PRO_0000389052" description="Uncharacterized protein ORF61">
    <location>
        <begin position="1"/>
        <end position="61"/>
    </location>
</feature>
<keyword id="KW-1185">Reference proteome</keyword>
<organismHost>
    <name type="scientific">Acidianus convivator</name>
    <dbReference type="NCBI Taxonomy" id="269667"/>
</organismHost>
<dbReference type="EMBL" id="AJ888457">
    <property type="protein sequence ID" value="CAI59847.1"/>
    <property type="molecule type" value="Genomic_DNA"/>
</dbReference>
<dbReference type="RefSeq" id="YP_319845.1">
    <property type="nucleotide sequence ID" value="NC_007409.1"/>
</dbReference>
<dbReference type="GeneID" id="4484222"/>
<dbReference type="KEGG" id="vg:4484222"/>
<dbReference type="Proteomes" id="UP000002150">
    <property type="component" value="Genome"/>
</dbReference>
<organism>
    <name type="scientific">Acidianus two-tailed virus</name>
    <name type="common">ATV</name>
    <dbReference type="NCBI Taxonomy" id="315953"/>
    <lineage>
        <taxon>Viruses</taxon>
        <taxon>Viruses incertae sedis</taxon>
        <taxon>Bicaudaviridae</taxon>
        <taxon>Bicaudavirus</taxon>
    </lineage>
</organism>
<reference key="1">
    <citation type="journal article" date="2005" name="Nature">
        <title>Virology: independent virus development outside a host.</title>
        <authorList>
            <person name="Haring M."/>
            <person name="Vestergaard G."/>
            <person name="Rachel R."/>
            <person name="Chen L."/>
            <person name="Garrett R.A."/>
            <person name="Prangishvili D."/>
        </authorList>
    </citation>
    <scope>NUCLEOTIDE SEQUENCE [GENOMIC DNA]</scope>
</reference>
<accession>Q3V4W7</accession>
<sequence>MLEGLFKNKKQEEADEGDQVLILDILDEERTMLPPGFEIVSTTQDGKIIAKDREGHLWVIK</sequence>
<name>Y061_ATV</name>